<comment type="function">
    <text evidence="1">DNA-dependent RNA polymerase catalyzes the transcription of DNA into RNA using the four ribonucleoside triphosphates as substrates.</text>
</comment>
<comment type="catalytic activity">
    <reaction evidence="1">
        <text>RNA(n) + a ribonucleoside 5'-triphosphate = RNA(n+1) + diphosphate</text>
        <dbReference type="Rhea" id="RHEA:21248"/>
        <dbReference type="Rhea" id="RHEA-COMP:14527"/>
        <dbReference type="Rhea" id="RHEA-COMP:17342"/>
        <dbReference type="ChEBI" id="CHEBI:33019"/>
        <dbReference type="ChEBI" id="CHEBI:61557"/>
        <dbReference type="ChEBI" id="CHEBI:140395"/>
        <dbReference type="EC" id="2.7.7.6"/>
    </reaction>
</comment>
<comment type="cofactor">
    <cofactor evidence="1">
        <name>Mg(2+)</name>
        <dbReference type="ChEBI" id="CHEBI:18420"/>
    </cofactor>
    <text evidence="1">Binds 1 Mg(2+) ion per subunit.</text>
</comment>
<comment type="cofactor">
    <cofactor evidence="1">
        <name>Zn(2+)</name>
        <dbReference type="ChEBI" id="CHEBI:29105"/>
    </cofactor>
    <text evidence="1">Binds 1 Zn(2+) ion per subunit.</text>
</comment>
<comment type="subunit">
    <text evidence="1">In cyanobacteria the RNAP catalytic core is composed of 2 alpha, 1 beta, 1 beta', 1 gamma and 1 omega subunit. When a sigma factor is associated with the core the holoenzyme is formed, which can initiate transcription.</text>
</comment>
<comment type="similarity">
    <text evidence="1">Belongs to the RNA polymerase beta' chain family. RpoC1 subfamily.</text>
</comment>
<sequence>MTNSNLRTENHFDYVKITLASPDRVMEWGQRTLPNGQVVGEVTKPETINYRTLKPEMDGLFCEKIFGPSKDWECHCGKYKRVRHRGIVCERCGVEVTESRVRRHRMGFIKLAAPVSHVWYLKGIPSYVAILLDMPLRDVEQIVYFNCYVVLDPGDHKELKYKQLLTEDEWLEIEDEIYAEDSTIENEPIVGIGAEALKQLLEDLNLAEVAEQLREDISSSKGQKRAKLIKRLRVIDNFIATNARPEWMVLDAIPVIPPDLRPMVQLDGGRFATSDLNDLYRRVINRNNRLARLQEILAPEIIVRNEKRMLQEAVDALIDNGRRGRTVVGANNRPLKSLSDIIEGKQGRFRQNLLGKRVDYSGRSVIVVGPKLKMHQCGLPKEMAIELFQPFVIHRLIRQNIVNNIKAAKKLIQRADDEVMQVLQEVIEGHPILLNRAPTLHRLGIQAFEPKLVAGRAIQLHPLVCPAFNADFDGDQMAVHVPLAIEAQTEARMLMLASNNILSPATGDPIITPSQDMVLGSYYLTAIKPGASVPEFGDQSRTYAGLEDVIHAFEDKRLLLHDWVWVRFNGEVEDEDEIDKPLKAESLSDGTRIEQWTYRRDRFDEDGALISRYILTTVGRVVMNYTIIDAVAAA</sequence>
<organism>
    <name type="scientific">Prochlorococcus marinus (strain MIT 9303)</name>
    <dbReference type="NCBI Taxonomy" id="59922"/>
    <lineage>
        <taxon>Bacteria</taxon>
        <taxon>Bacillati</taxon>
        <taxon>Cyanobacteriota</taxon>
        <taxon>Cyanophyceae</taxon>
        <taxon>Synechococcales</taxon>
        <taxon>Prochlorococcaceae</taxon>
        <taxon>Prochlorococcus</taxon>
    </lineage>
</organism>
<gene>
    <name evidence="1" type="primary">rpoC1</name>
    <name type="ordered locus">P9303_04371</name>
</gene>
<dbReference type="EC" id="2.7.7.6" evidence="1"/>
<dbReference type="EMBL" id="CP000554">
    <property type="protein sequence ID" value="ABM77189.1"/>
    <property type="molecule type" value="Genomic_DNA"/>
</dbReference>
<dbReference type="RefSeq" id="WP_011825114.1">
    <property type="nucleotide sequence ID" value="NC_008820.1"/>
</dbReference>
<dbReference type="SMR" id="A2C6S9"/>
<dbReference type="STRING" id="59922.P9303_04371"/>
<dbReference type="KEGG" id="pmf:P9303_04371"/>
<dbReference type="HOGENOM" id="CLU_030022_2_0_3"/>
<dbReference type="BioCyc" id="PMAR59922:G1G80-406-MONOMER"/>
<dbReference type="Proteomes" id="UP000002274">
    <property type="component" value="Chromosome"/>
</dbReference>
<dbReference type="GO" id="GO:0000428">
    <property type="term" value="C:DNA-directed RNA polymerase complex"/>
    <property type="evidence" value="ECO:0007669"/>
    <property type="project" value="UniProtKB-KW"/>
</dbReference>
<dbReference type="GO" id="GO:0003677">
    <property type="term" value="F:DNA binding"/>
    <property type="evidence" value="ECO:0007669"/>
    <property type="project" value="UniProtKB-UniRule"/>
</dbReference>
<dbReference type="GO" id="GO:0003899">
    <property type="term" value="F:DNA-directed RNA polymerase activity"/>
    <property type="evidence" value="ECO:0007669"/>
    <property type="project" value="UniProtKB-UniRule"/>
</dbReference>
<dbReference type="GO" id="GO:0000287">
    <property type="term" value="F:magnesium ion binding"/>
    <property type="evidence" value="ECO:0007669"/>
    <property type="project" value="UniProtKB-UniRule"/>
</dbReference>
<dbReference type="GO" id="GO:0008270">
    <property type="term" value="F:zinc ion binding"/>
    <property type="evidence" value="ECO:0007669"/>
    <property type="project" value="UniProtKB-UniRule"/>
</dbReference>
<dbReference type="GO" id="GO:0006351">
    <property type="term" value="P:DNA-templated transcription"/>
    <property type="evidence" value="ECO:0007669"/>
    <property type="project" value="UniProtKB-UniRule"/>
</dbReference>
<dbReference type="Gene3D" id="1.10.40.90">
    <property type="match status" value="1"/>
</dbReference>
<dbReference type="Gene3D" id="2.40.40.20">
    <property type="match status" value="1"/>
</dbReference>
<dbReference type="Gene3D" id="4.10.860.120">
    <property type="entry name" value="RNA polymerase II, clamp domain"/>
    <property type="match status" value="1"/>
</dbReference>
<dbReference type="Gene3D" id="1.10.274.100">
    <property type="entry name" value="RNA polymerase Rpb1, domain 3"/>
    <property type="match status" value="1"/>
</dbReference>
<dbReference type="HAMAP" id="MF_01323">
    <property type="entry name" value="RNApol_bact_RpoC1"/>
    <property type="match status" value="1"/>
</dbReference>
<dbReference type="InterPro" id="IPR012755">
    <property type="entry name" value="DNA-dir_RpoC1_gamma"/>
</dbReference>
<dbReference type="InterPro" id="IPR045867">
    <property type="entry name" value="DNA-dir_RpoC_beta_prime"/>
</dbReference>
<dbReference type="InterPro" id="IPR000722">
    <property type="entry name" value="RNA_pol_asu"/>
</dbReference>
<dbReference type="InterPro" id="IPR006592">
    <property type="entry name" value="RNA_pol_N"/>
</dbReference>
<dbReference type="InterPro" id="IPR007080">
    <property type="entry name" value="RNA_pol_Rpb1_1"/>
</dbReference>
<dbReference type="InterPro" id="IPR007066">
    <property type="entry name" value="RNA_pol_Rpb1_3"/>
</dbReference>
<dbReference type="InterPro" id="IPR042102">
    <property type="entry name" value="RNA_pol_Rpb1_3_sf"/>
</dbReference>
<dbReference type="InterPro" id="IPR044893">
    <property type="entry name" value="RNA_pol_Rpb1_clamp_domain"/>
</dbReference>
<dbReference type="InterPro" id="IPR034678">
    <property type="entry name" value="RNApol_RpoC1"/>
</dbReference>
<dbReference type="NCBIfam" id="NF002729">
    <property type="entry name" value="PRK02625.1"/>
    <property type="match status" value="1"/>
</dbReference>
<dbReference type="NCBIfam" id="TIGR02387">
    <property type="entry name" value="rpoC1_cyan"/>
    <property type="match status" value="1"/>
</dbReference>
<dbReference type="PANTHER" id="PTHR19376">
    <property type="entry name" value="DNA-DIRECTED RNA POLYMERASE"/>
    <property type="match status" value="1"/>
</dbReference>
<dbReference type="PANTHER" id="PTHR19376:SF54">
    <property type="entry name" value="DNA-DIRECTED RNA POLYMERASE SUBUNIT BETA"/>
    <property type="match status" value="1"/>
</dbReference>
<dbReference type="Pfam" id="PF04997">
    <property type="entry name" value="RNA_pol_Rpb1_1"/>
    <property type="match status" value="1"/>
</dbReference>
<dbReference type="Pfam" id="PF00623">
    <property type="entry name" value="RNA_pol_Rpb1_2"/>
    <property type="match status" value="1"/>
</dbReference>
<dbReference type="Pfam" id="PF04983">
    <property type="entry name" value="RNA_pol_Rpb1_3"/>
    <property type="match status" value="1"/>
</dbReference>
<dbReference type="SMART" id="SM00663">
    <property type="entry name" value="RPOLA_N"/>
    <property type="match status" value="1"/>
</dbReference>
<dbReference type="SUPFAM" id="SSF64484">
    <property type="entry name" value="beta and beta-prime subunits of DNA dependent RNA-polymerase"/>
    <property type="match status" value="1"/>
</dbReference>
<evidence type="ECO:0000255" key="1">
    <source>
        <dbReference type="HAMAP-Rule" id="MF_01323"/>
    </source>
</evidence>
<name>RPOC1_PROM3</name>
<proteinExistence type="inferred from homology"/>
<accession>A2C6S9</accession>
<protein>
    <recommendedName>
        <fullName evidence="1">DNA-directed RNA polymerase subunit gamma</fullName>
        <shortName evidence="1">RNAP subunit gamma</shortName>
        <ecNumber evidence="1">2.7.7.6</ecNumber>
    </recommendedName>
    <alternativeName>
        <fullName evidence="1">RNA polymerase subunit gamma</fullName>
    </alternativeName>
    <alternativeName>
        <fullName evidence="1">Transcriptase subunit gamma</fullName>
    </alternativeName>
</protein>
<keyword id="KW-0240">DNA-directed RNA polymerase</keyword>
<keyword id="KW-0460">Magnesium</keyword>
<keyword id="KW-0479">Metal-binding</keyword>
<keyword id="KW-0548">Nucleotidyltransferase</keyword>
<keyword id="KW-0804">Transcription</keyword>
<keyword id="KW-0808">Transferase</keyword>
<keyword id="KW-0862">Zinc</keyword>
<reference key="1">
    <citation type="journal article" date="2007" name="PLoS Genet.">
        <title>Patterns and implications of gene gain and loss in the evolution of Prochlorococcus.</title>
        <authorList>
            <person name="Kettler G.C."/>
            <person name="Martiny A.C."/>
            <person name="Huang K."/>
            <person name="Zucker J."/>
            <person name="Coleman M.L."/>
            <person name="Rodrigue S."/>
            <person name="Chen F."/>
            <person name="Lapidus A."/>
            <person name="Ferriera S."/>
            <person name="Johnson J."/>
            <person name="Steglich C."/>
            <person name="Church G.M."/>
            <person name="Richardson P."/>
            <person name="Chisholm S.W."/>
        </authorList>
    </citation>
    <scope>NUCLEOTIDE SEQUENCE [LARGE SCALE GENOMIC DNA]</scope>
    <source>
        <strain>MIT 9303</strain>
    </source>
</reference>
<feature type="chain" id="PRO_1000051991" description="DNA-directed RNA polymerase subunit gamma">
    <location>
        <begin position="1"/>
        <end position="634"/>
    </location>
</feature>
<feature type="binding site" evidence="1">
    <location>
        <position position="74"/>
    </location>
    <ligand>
        <name>Zn(2+)</name>
        <dbReference type="ChEBI" id="CHEBI:29105"/>
    </ligand>
</feature>
<feature type="binding site" evidence="1">
    <location>
        <position position="76"/>
    </location>
    <ligand>
        <name>Zn(2+)</name>
        <dbReference type="ChEBI" id="CHEBI:29105"/>
    </ligand>
</feature>
<feature type="binding site" evidence="1">
    <location>
        <position position="89"/>
    </location>
    <ligand>
        <name>Zn(2+)</name>
        <dbReference type="ChEBI" id="CHEBI:29105"/>
    </ligand>
</feature>
<feature type="binding site" evidence="1">
    <location>
        <position position="92"/>
    </location>
    <ligand>
        <name>Zn(2+)</name>
        <dbReference type="ChEBI" id="CHEBI:29105"/>
    </ligand>
</feature>
<feature type="binding site" evidence="1">
    <location>
        <position position="471"/>
    </location>
    <ligand>
        <name>Mg(2+)</name>
        <dbReference type="ChEBI" id="CHEBI:18420"/>
    </ligand>
</feature>
<feature type="binding site" evidence="1">
    <location>
        <position position="473"/>
    </location>
    <ligand>
        <name>Mg(2+)</name>
        <dbReference type="ChEBI" id="CHEBI:18420"/>
    </ligand>
</feature>
<feature type="binding site" evidence="1">
    <location>
        <position position="475"/>
    </location>
    <ligand>
        <name>Mg(2+)</name>
        <dbReference type="ChEBI" id="CHEBI:18420"/>
    </ligand>
</feature>